<evidence type="ECO:0000250" key="1">
    <source>
        <dbReference type="UniProtKB" id="P04798"/>
    </source>
</evidence>
<evidence type="ECO:0000255" key="2"/>
<evidence type="ECO:0000255" key="3">
    <source>
        <dbReference type="PROSITE-ProRule" id="PRU00498"/>
    </source>
</evidence>
<evidence type="ECO:0000269" key="4">
    <source>
    </source>
</evidence>
<evidence type="ECO:0000269" key="5">
    <source>
    </source>
</evidence>
<evidence type="ECO:0000303" key="6">
    <source>
    </source>
</evidence>
<evidence type="ECO:0000305" key="7"/>
<evidence type="ECO:0000305" key="8">
    <source>
    </source>
</evidence>
<evidence type="ECO:0000305" key="9">
    <source>
    </source>
</evidence>
<name>BOA7_BOTFB</name>
<gene>
    <name evidence="6" type="primary">BOA7</name>
</gene>
<proteinExistence type="evidence at transcript level"/>
<accession>G0LET5</accession>
<reference key="1">
    <citation type="journal article" date="2011" name="Mol. Plant Pathol.">
        <title>The Botrytis cinerea phytotoxin botcinic acid requires two polyketide synthases for production and has a redundant role in virulence with botrydial.</title>
        <authorList>
            <person name="Dalmais B."/>
            <person name="Schumacher J."/>
            <person name="Moraga J."/>
            <person name="Le Pecheur P."/>
            <person name="Tudzynski B."/>
            <person name="Collado I.G."/>
            <person name="Viaud M."/>
        </authorList>
    </citation>
    <scope>NUCLEOTIDE SEQUENCE [GENOMIC DNA]</scope>
    <scope>FUNCTION</scope>
    <scope>INDUCTION</scope>
    <scope>PATHWAY</scope>
    <source>
        <strain>B05.10</strain>
    </source>
</reference>
<reference key="2">
    <citation type="journal article" date="2013" name="ChemBioChem">
        <title>A shared biosynthetic pathway for botcinins and botrylactones revealed through gene deletions.</title>
        <authorList>
            <person name="Massaroli M."/>
            <person name="Moraga J."/>
            <person name="Bastos Borges K."/>
            <person name="Ramirez-Fernandez J."/>
            <person name="Viaud M."/>
            <person name="Gonzalez Collado I."/>
            <person name="Duran-Patron R."/>
            <person name="Hernandez-Galan R."/>
        </authorList>
    </citation>
    <scope>FUNCTION</scope>
    <scope>PATHWAY</scope>
</reference>
<dbReference type="EC" id="1.-.-.-" evidence="8"/>
<dbReference type="EMBL" id="FR717895">
    <property type="protein sequence ID" value="CBX55165.1"/>
    <property type="molecule type" value="Genomic_DNA"/>
</dbReference>
<dbReference type="SMR" id="G0LET5"/>
<dbReference type="GlyCosmos" id="G0LET5">
    <property type="glycosylation" value="4 sites, No reported glycans"/>
</dbReference>
<dbReference type="EnsemblFungi" id="Bcin01g00070.1">
    <property type="protein sequence ID" value="Bcin01p00070.1"/>
    <property type="gene ID" value="Bcin01g00070"/>
</dbReference>
<dbReference type="VEuPathDB" id="FungiDB:Bcin01g00070"/>
<dbReference type="OrthoDB" id="1844152at2759"/>
<dbReference type="GO" id="GO:0016020">
    <property type="term" value="C:membrane"/>
    <property type="evidence" value="ECO:0007669"/>
    <property type="project" value="UniProtKB-SubCell"/>
</dbReference>
<dbReference type="GO" id="GO:0020037">
    <property type="term" value="F:heme binding"/>
    <property type="evidence" value="ECO:0007669"/>
    <property type="project" value="InterPro"/>
</dbReference>
<dbReference type="GO" id="GO:0005506">
    <property type="term" value="F:iron ion binding"/>
    <property type="evidence" value="ECO:0007669"/>
    <property type="project" value="InterPro"/>
</dbReference>
<dbReference type="GO" id="GO:0004497">
    <property type="term" value="F:monooxygenase activity"/>
    <property type="evidence" value="ECO:0007669"/>
    <property type="project" value="UniProtKB-KW"/>
</dbReference>
<dbReference type="GO" id="GO:0016705">
    <property type="term" value="F:oxidoreductase activity, acting on paired donors, with incorporation or reduction of molecular oxygen"/>
    <property type="evidence" value="ECO:0007669"/>
    <property type="project" value="InterPro"/>
</dbReference>
<dbReference type="GO" id="GO:0019748">
    <property type="term" value="P:secondary metabolic process"/>
    <property type="evidence" value="ECO:0007669"/>
    <property type="project" value="UniProtKB-ARBA"/>
</dbReference>
<dbReference type="CDD" id="cd11041">
    <property type="entry name" value="CYP503A1-like"/>
    <property type="match status" value="1"/>
</dbReference>
<dbReference type="Gene3D" id="1.10.630.10">
    <property type="entry name" value="Cytochrome P450"/>
    <property type="match status" value="1"/>
</dbReference>
<dbReference type="InterPro" id="IPR001128">
    <property type="entry name" value="Cyt_P450"/>
</dbReference>
<dbReference type="InterPro" id="IPR017972">
    <property type="entry name" value="Cyt_P450_CS"/>
</dbReference>
<dbReference type="InterPro" id="IPR002403">
    <property type="entry name" value="Cyt_P450_E_grp-IV"/>
</dbReference>
<dbReference type="InterPro" id="IPR036396">
    <property type="entry name" value="Cyt_P450_sf"/>
</dbReference>
<dbReference type="PANTHER" id="PTHR46206">
    <property type="entry name" value="CYTOCHROME P450"/>
    <property type="match status" value="1"/>
</dbReference>
<dbReference type="PANTHER" id="PTHR46206:SF6">
    <property type="entry name" value="CYTOCHROME P450 MONOOXYGENASE AN1598-RELATED"/>
    <property type="match status" value="1"/>
</dbReference>
<dbReference type="Pfam" id="PF00067">
    <property type="entry name" value="p450"/>
    <property type="match status" value="1"/>
</dbReference>
<dbReference type="PRINTS" id="PR00465">
    <property type="entry name" value="EP450IV"/>
</dbReference>
<dbReference type="PRINTS" id="PR00385">
    <property type="entry name" value="P450"/>
</dbReference>
<dbReference type="SUPFAM" id="SSF48264">
    <property type="entry name" value="Cytochrome P450"/>
    <property type="match status" value="1"/>
</dbReference>
<dbReference type="PROSITE" id="PS00086">
    <property type="entry name" value="CYTOCHROME_P450"/>
    <property type="match status" value="1"/>
</dbReference>
<sequence>MYQRLKEINFRKPLELEWNSIFLILGFFVLAAILIAWTQRPDEELLLERLKDLDLPIVGVGPNINVSESLEIGTQTYPNSPYVVPADRVPIVILPNSAINIIKSLPEAKISFEKEVYARHLAHLLLKKDQKIFSEPILNSIKQDLTRNISKTLDTLWDEVDYAFEKNIGTLPDDDDGWKNVSVYGKVLNVVALLSGRVFVGAPLCRDEEWIKATIAYTIILGVTVGMLWKRPWWQRKILAPLYFRTLVGVHKKAEELLKPLLEREAALDPSEWEKKAGEQNDGQLIRWLLSHTPQKGGKIDVKQLAHDQLTVSLAAIHTTSITISHLLYDLATYPEHVAPLRTELESVIADHKTAGGNGKLSKVELTKLWKMDSFIKESQRLNPPILVQMRRYLTSPLALPSGHILPSGTFCGVDAQMTNRTVPYYEASPITHQQTPFDTFDGFRFSKLRSVPGNENRYQFVTSSTESLNFGHGTHACPGRFFASNEIKIAFAEVLLKWDVRLKPGEGRPANLYTDTNVMPNMKGEVQMRRRELI</sequence>
<comment type="function">
    <text evidence="4 5 9">Cytochrome P450 monooxygenase; part of the gene cluster B that mediates the biosynthesis of botcinic acid and its botcinin derivatives, acetate-derived polyketides that contribute to virulence when combined with the sesquiterpene botrydial (PubMed:21722295). Botcinic acid and its derivatives have been shown to induce chlorosis and necrosis during host plant infection, but also have antifungal activities (PubMed:21722295). Two polyketide synthases, BOA6 and BOA9, are involved in the biosynthesis of botcinins. BOA6 mediates the formation of the per-methylated tetraketide core by condensation of four units of malonyl-CoA with one unit of acetyl-CoA, which would be methylated in activated methylene groups to yield a bicyclic acid intermediate that could then either be converted to botrylactone derivatives or lose the starter acetate unit through a retro-Claisen type C-C bond cleavage to yield botcinin derivatives (PubMed:23203902). The second polyketide synthase, BOA9, is probably required for the biosynthesis of the tetraketide side chain of botcinins (Probable). The methyltransferase (MT) domain within BOA6 is probably responsible for the incorporation of four methyl groups (Probable). The trans-enoyl reductase BOA5 might take over the enoyl reductase function of BOA6 that misses an ER domain (Probable). The monooxygenases BOA2, BOA3 and BOA4 might be involved in further hydroxylations at C4, C5 and C8, whereas BOA7, close to BOA9, could potentially be involved in the hydroxylation at C4 in the side chain of botcinins (Probable).</text>
</comment>
<comment type="cofactor">
    <cofactor evidence="1">
        <name>heme</name>
        <dbReference type="ChEBI" id="CHEBI:30413"/>
    </cofactor>
</comment>
<comment type="pathway">
    <text evidence="8 9">Polyketide biosynthesis.</text>
</comment>
<comment type="subcellular location">
    <subcellularLocation>
        <location evidence="2">Membrane</location>
        <topology evidence="2">Single-pass membrane protein</topology>
    </subcellularLocation>
</comment>
<comment type="induction">
    <text evidence="4">Expression of the botcinic acid clusters genes BOA1-13 and BOA17 is coregulated by BCG1 during both in vitro and in planta growth.</text>
</comment>
<comment type="similarity">
    <text evidence="7">Belongs to the cytochrome P450 family.</text>
</comment>
<organism>
    <name type="scientific">Botryotinia fuckeliana (strain B05.10)</name>
    <name type="common">Noble rot fungus</name>
    <name type="synonym">Botrytis cinerea</name>
    <dbReference type="NCBI Taxonomy" id="332648"/>
    <lineage>
        <taxon>Eukaryota</taxon>
        <taxon>Fungi</taxon>
        <taxon>Dikarya</taxon>
        <taxon>Ascomycota</taxon>
        <taxon>Pezizomycotina</taxon>
        <taxon>Leotiomycetes</taxon>
        <taxon>Helotiales</taxon>
        <taxon>Sclerotiniaceae</taxon>
        <taxon>Botrytis</taxon>
    </lineage>
</organism>
<feature type="chain" id="PRO_0000444641" description="Cytochrome P450 monooxygenase BOA7">
    <location>
        <begin position="1"/>
        <end position="535"/>
    </location>
</feature>
<feature type="transmembrane region" description="Helical" evidence="2">
    <location>
        <begin position="20"/>
        <end position="37"/>
    </location>
</feature>
<feature type="binding site" description="axial binding residue" evidence="1">
    <location>
        <position position="478"/>
    </location>
    <ligand>
        <name>heme</name>
        <dbReference type="ChEBI" id="CHEBI:30413"/>
    </ligand>
    <ligandPart>
        <name>Fe</name>
        <dbReference type="ChEBI" id="CHEBI:18248"/>
    </ligandPart>
</feature>
<feature type="glycosylation site" description="N-linked (GlcNAc...) asparagine" evidence="3">
    <location>
        <position position="65"/>
    </location>
</feature>
<feature type="glycosylation site" description="N-linked (GlcNAc...) asparagine" evidence="3">
    <location>
        <position position="148"/>
    </location>
</feature>
<feature type="glycosylation site" description="N-linked (GlcNAc...) asparagine" evidence="3">
    <location>
        <position position="180"/>
    </location>
</feature>
<feature type="glycosylation site" description="N-linked (GlcNAc...) asparagine" evidence="3">
    <location>
        <position position="420"/>
    </location>
</feature>
<keyword id="KW-0325">Glycoprotein</keyword>
<keyword id="KW-0349">Heme</keyword>
<keyword id="KW-0408">Iron</keyword>
<keyword id="KW-0472">Membrane</keyword>
<keyword id="KW-0479">Metal-binding</keyword>
<keyword id="KW-0503">Monooxygenase</keyword>
<keyword id="KW-0560">Oxidoreductase</keyword>
<keyword id="KW-0812">Transmembrane</keyword>
<keyword id="KW-1133">Transmembrane helix</keyword>
<keyword id="KW-0843">Virulence</keyword>
<protein>
    <recommendedName>
        <fullName evidence="6">Cytochrome P450 monooxygenase BOA7</fullName>
        <ecNumber evidence="8">1.-.-.-</ecNumber>
    </recommendedName>
    <alternativeName>
        <fullName evidence="6">Botcinic acid biosynthesis cluster B protein 7</fullName>
    </alternativeName>
</protein>